<protein>
    <recommendedName>
        <fullName>Protein E5</fullName>
    </recommendedName>
</protein>
<accession>P0CK46</accession>
<accession>P06928</accession>
<feature type="chain" id="PRO_0000415967" description="Protein E5">
    <location>
        <begin position="1"/>
        <end position="44"/>
    </location>
</feature>
<feature type="region of interest" description="Cellular DNA synthesis induction" evidence="1">
    <location>
        <begin position="32"/>
        <end position="44"/>
    </location>
</feature>
<comment type="function">
    <text evidence="1">E5 can induce cellular DNA synthesis. It seems to interact with a 16 kDa cellular protein. E5 seems to activate the PDGF receptor (By similarity).</text>
</comment>
<comment type="subunit">
    <text evidence="1">Dimer or monomer.</text>
</comment>
<comment type="subcellular location">
    <subcellularLocation>
        <location evidence="1">Host membrane</location>
        <topology evidence="1">Peripheral membrane protein</topology>
    </subcellularLocation>
</comment>
<comment type="similarity">
    <text evidence="2">Belongs to the papillomaviridae E5 protein family.</text>
</comment>
<organismHost>
    <name type="scientific">Bos taurus</name>
    <name type="common">Bovine</name>
    <dbReference type="NCBI Taxonomy" id="9913"/>
</organismHost>
<dbReference type="EMBL" id="M20219">
    <property type="protein sequence ID" value="AAA66838.1"/>
    <property type="molecule type" value="Genomic_DNA"/>
</dbReference>
<dbReference type="Proteomes" id="UP000007612">
    <property type="component" value="Segment"/>
</dbReference>
<dbReference type="GO" id="GO:0033644">
    <property type="term" value="C:host cell membrane"/>
    <property type="evidence" value="ECO:0007669"/>
    <property type="project" value="UniProtKB-SubCell"/>
</dbReference>
<dbReference type="GO" id="GO:0016020">
    <property type="term" value="C:membrane"/>
    <property type="evidence" value="ECO:0007669"/>
    <property type="project" value="UniProtKB-KW"/>
</dbReference>
<dbReference type="InterPro" id="IPR012555">
    <property type="entry name" value="EPV_E5"/>
</dbReference>
<dbReference type="Pfam" id="PF08135">
    <property type="entry name" value="EPV_E5"/>
    <property type="match status" value="1"/>
</dbReference>
<dbReference type="PIRSF" id="PIRSF003401">
    <property type="entry name" value="EPV_E5"/>
    <property type="match status" value="1"/>
</dbReference>
<proteinExistence type="inferred from homology"/>
<evidence type="ECO:0000250" key="1"/>
<evidence type="ECO:0000305" key="2"/>
<keyword id="KW-0244">Early protein</keyword>
<keyword id="KW-1043">Host membrane</keyword>
<keyword id="KW-0472">Membrane</keyword>
<keyword id="KW-0553">Oncogene</keyword>
<sequence>MPNLWFLLFLGLVAAMQLLLLLFLLLFFLVYWDHFECSCTGLPF</sequence>
<reference key="1">
    <citation type="submission" date="1988-05" db="EMBL/GenBank/DDBJ databases">
        <authorList>
            <person name="Groff D.E."/>
            <person name="Mitra R."/>
            <person name="Lancaster W.D."/>
        </authorList>
    </citation>
    <scope>NUCLEOTIDE SEQUENCE [GENOMIC DNA]</scope>
</reference>
<organism>
    <name type="scientific">Bos taurus papillomavirus 2</name>
    <name type="common">Bovine papillomavirus 2</name>
    <dbReference type="NCBI Taxonomy" id="2758382"/>
    <lineage>
        <taxon>Viruses</taxon>
        <taxon>Monodnaviria</taxon>
        <taxon>Shotokuvirae</taxon>
        <taxon>Cossaviricota</taxon>
        <taxon>Papovaviricetes</taxon>
        <taxon>Zurhausenvirales</taxon>
        <taxon>Papillomaviridae</taxon>
        <taxon>Firstpapillomavirinae</taxon>
        <taxon>Deltapapillomavirus</taxon>
        <taxon>Bovine papillomavirus type 1</taxon>
    </lineage>
</organism>
<gene>
    <name type="primary">E5</name>
</gene>
<name>VE5_BPV2</name>